<keyword id="KW-0963">Cytoplasm</keyword>
<keyword id="KW-0315">Glutamine amidotransferase</keyword>
<keyword id="KW-1185">Reference proteome</keyword>
<keyword id="KW-0808">Transferase</keyword>
<name>YL126_YEAST</name>
<gene>
    <name type="ordered locus">YLR126C</name>
    <name type="ORF">L3105</name>
</gene>
<organism>
    <name type="scientific">Saccharomyces cerevisiae (strain ATCC 204508 / S288c)</name>
    <name type="common">Baker's yeast</name>
    <dbReference type="NCBI Taxonomy" id="559292"/>
    <lineage>
        <taxon>Eukaryota</taxon>
        <taxon>Fungi</taxon>
        <taxon>Dikarya</taxon>
        <taxon>Ascomycota</taxon>
        <taxon>Saccharomycotina</taxon>
        <taxon>Saccharomycetes</taxon>
        <taxon>Saccharomycetales</taxon>
        <taxon>Saccharomycetaceae</taxon>
        <taxon>Saccharomyces</taxon>
    </lineage>
</organism>
<proteinExistence type="evidence at protein level"/>
<feature type="chain" id="PRO_0000247340" description="Putative glutamine amidotransferase YLR126C">
    <location>
        <begin position="1"/>
        <end position="251"/>
    </location>
</feature>
<feature type="domain" description="Glutamine amidotransferase type-1" evidence="1">
    <location>
        <begin position="48"/>
        <end position="232"/>
    </location>
</feature>
<feature type="active site" description="For GATase activity" evidence="1">
    <location>
        <position position="112"/>
    </location>
</feature>
<feature type="active site" description="For GATase activity" evidence="1">
    <location>
        <position position="198"/>
    </location>
</feature>
<feature type="active site" description="For GATase activity" evidence="1">
    <location>
        <position position="200"/>
    </location>
</feature>
<protein>
    <recommendedName>
        <fullName>Putative glutamine amidotransferase YLR126C</fullName>
        <ecNumber>2.4.2.-</ecNumber>
    </recommendedName>
</protein>
<evidence type="ECO:0000255" key="1">
    <source>
        <dbReference type="PROSITE-ProRule" id="PRU00605"/>
    </source>
</evidence>
<evidence type="ECO:0000269" key="2">
    <source>
    </source>
</evidence>
<evidence type="ECO:0000269" key="3">
    <source>
    </source>
</evidence>
<evidence type="ECO:0000269" key="4">
    <source>
    </source>
</evidence>
<evidence type="ECO:0000269" key="5">
    <source>
    </source>
</evidence>
<sequence>MTVKKIAILYTDEDNEWSKPWGNFVDMAIKLLEQTRKLECIAEDVEYEVFHVQKNVFPQLSDLQKDEYLGIYITGSKYDSFDNEIEWIMKLRSFLNEMLTSKTEYPPVAGICFGHQVIAAALGSSVGRNPKGFEGGVVSLKLNSVGQKLFGAQELNLSEVHSDCVFDVPEGYQNWASSEKCQNQGFYRQNRVLTFQGHPEFNSDVAQKGLLKSQDKLTLEEFNRYERQCQELDNNGIQAARNIWRLFLQKI</sequence>
<reference key="1">
    <citation type="journal article" date="1997" name="Yeast">
        <title>Sequence analysis of a 37.6 kbp cosmid clone from the right arm of Saccharomyces cerevisiae chromosome XII, carrying YAP3, HOG1, SNR6, tRNA-Arg3 and 23 new open reading frames, among which several homologies to proteins involved in cell division control and to mammalian growth factors and other animal proteins are found.</title>
        <authorList>
            <person name="Verhasselt P."/>
            <person name="Volckaert G."/>
        </authorList>
    </citation>
    <scope>NUCLEOTIDE SEQUENCE [GENOMIC DNA]</scope>
    <source>
        <strain>ATCC 90840 / EAY235 / FY23</strain>
    </source>
</reference>
<reference key="2">
    <citation type="journal article" date="1997" name="Nature">
        <title>The nucleotide sequence of Saccharomyces cerevisiae chromosome XII.</title>
        <authorList>
            <person name="Johnston M."/>
            <person name="Hillier L.W."/>
            <person name="Riles L."/>
            <person name="Albermann K."/>
            <person name="Andre B."/>
            <person name="Ansorge W."/>
            <person name="Benes V."/>
            <person name="Brueckner M."/>
            <person name="Delius H."/>
            <person name="Dubois E."/>
            <person name="Duesterhoeft A."/>
            <person name="Entian K.-D."/>
            <person name="Floeth M."/>
            <person name="Goffeau A."/>
            <person name="Hebling U."/>
            <person name="Heumann K."/>
            <person name="Heuss-Neitzel D."/>
            <person name="Hilbert H."/>
            <person name="Hilger F."/>
            <person name="Kleine K."/>
            <person name="Koetter P."/>
            <person name="Louis E.J."/>
            <person name="Messenguy F."/>
            <person name="Mewes H.-W."/>
            <person name="Miosga T."/>
            <person name="Moestl D."/>
            <person name="Mueller-Auer S."/>
            <person name="Nentwich U."/>
            <person name="Obermaier B."/>
            <person name="Piravandi E."/>
            <person name="Pohl T.M."/>
            <person name="Portetelle D."/>
            <person name="Purnelle B."/>
            <person name="Rechmann S."/>
            <person name="Rieger M."/>
            <person name="Rinke M."/>
            <person name="Rose M."/>
            <person name="Scharfe M."/>
            <person name="Scherens B."/>
            <person name="Scholler P."/>
            <person name="Schwager C."/>
            <person name="Schwarz S."/>
            <person name="Underwood A.P."/>
            <person name="Urrestarazu L.A."/>
            <person name="Vandenbol M."/>
            <person name="Verhasselt P."/>
            <person name="Vierendeels F."/>
            <person name="Voet M."/>
            <person name="Volckaert G."/>
            <person name="Voss H."/>
            <person name="Wambutt R."/>
            <person name="Wedler E."/>
            <person name="Wedler H."/>
            <person name="Zimmermann F.K."/>
            <person name="Zollner A."/>
            <person name="Hani J."/>
            <person name="Hoheisel J.D."/>
        </authorList>
    </citation>
    <scope>NUCLEOTIDE SEQUENCE [LARGE SCALE GENOMIC DNA]</scope>
    <source>
        <strain>ATCC 204508 / S288c</strain>
    </source>
</reference>
<reference key="3">
    <citation type="journal article" date="2014" name="G3 (Bethesda)">
        <title>The reference genome sequence of Saccharomyces cerevisiae: Then and now.</title>
        <authorList>
            <person name="Engel S.R."/>
            <person name="Dietrich F.S."/>
            <person name="Fisk D.G."/>
            <person name="Binkley G."/>
            <person name="Balakrishnan R."/>
            <person name="Costanzo M.C."/>
            <person name="Dwight S.S."/>
            <person name="Hitz B.C."/>
            <person name="Karra K."/>
            <person name="Nash R.S."/>
            <person name="Weng S."/>
            <person name="Wong E.D."/>
            <person name="Lloyd P."/>
            <person name="Skrzypek M.S."/>
            <person name="Miyasato S.R."/>
            <person name="Simison M."/>
            <person name="Cherry J.M."/>
        </authorList>
    </citation>
    <scope>GENOME REANNOTATION</scope>
    <source>
        <strain>ATCC 204508 / S288c</strain>
    </source>
</reference>
<reference key="4">
    <citation type="journal article" date="2007" name="Genome Res.">
        <title>Approaching a complete repository of sequence-verified protein-encoding clones for Saccharomyces cerevisiae.</title>
        <authorList>
            <person name="Hu Y."/>
            <person name="Rolfs A."/>
            <person name="Bhullar B."/>
            <person name="Murthy T.V.S."/>
            <person name="Zhu C."/>
            <person name="Berger M.F."/>
            <person name="Camargo A.A."/>
            <person name="Kelley F."/>
            <person name="McCarron S."/>
            <person name="Jepson D."/>
            <person name="Richardson A."/>
            <person name="Raphael J."/>
            <person name="Moreira D."/>
            <person name="Taycher E."/>
            <person name="Zuo D."/>
            <person name="Mohr S."/>
            <person name="Kane M.F."/>
            <person name="Williamson J."/>
            <person name="Simpson A.J.G."/>
            <person name="Bulyk M.L."/>
            <person name="Harlow E."/>
            <person name="Marsischky G."/>
            <person name="Kolodner R.D."/>
            <person name="LaBaer J."/>
        </authorList>
    </citation>
    <scope>NUCLEOTIDE SEQUENCE [GENOMIC DNA]</scope>
    <source>
        <strain>ATCC 204508 / S288c</strain>
    </source>
</reference>
<reference key="5">
    <citation type="journal article" date="2003" name="Nature">
        <title>Global analysis of protein localization in budding yeast.</title>
        <authorList>
            <person name="Huh W.-K."/>
            <person name="Falvo J.V."/>
            <person name="Gerke L.C."/>
            <person name="Carroll A.S."/>
            <person name="Howson R.W."/>
            <person name="Weissman J.S."/>
            <person name="O'Shea E.K."/>
        </authorList>
    </citation>
    <scope>SUBCELLULAR LOCATION [LARGE SCALE ANALYSIS]</scope>
</reference>
<reference key="6">
    <citation type="journal article" date="2003" name="Nature">
        <title>Global analysis of protein expression in yeast.</title>
        <authorList>
            <person name="Ghaemmaghami S."/>
            <person name="Huh W.-K."/>
            <person name="Bower K."/>
            <person name="Howson R.W."/>
            <person name="Belle A."/>
            <person name="Dephoure N."/>
            <person name="O'Shea E.K."/>
            <person name="Weissman J.S."/>
        </authorList>
    </citation>
    <scope>LEVEL OF PROTEIN EXPRESSION [LARGE SCALE ANALYSIS]</scope>
</reference>
<reference key="7">
    <citation type="journal article" date="2004" name="J. Biol. Chem.">
        <title>Exploratory and confirmatory gene expression profiling of mac1Delta.</title>
        <authorList>
            <person name="De Freitas J.M."/>
            <person name="Kim J.H."/>
            <person name="Poynton H."/>
            <person name="Su T."/>
            <person name="Wintz H."/>
            <person name="Fox T."/>
            <person name="Holman P."/>
            <person name="Loguinov A."/>
            <person name="Keles S."/>
            <person name="van der Laan M."/>
            <person name="Vulpe C."/>
        </authorList>
    </citation>
    <scope>FUNCTION</scope>
</reference>
<reference key="8">
    <citation type="journal article" date="2005" name="Physiol. Genomics">
        <title>Gene expression profiling and phenotype analyses of S. cerevisiae in response to changing copper reveals six genes with new roles in copper and iron metabolism.</title>
        <authorList>
            <person name="van Bakel H."/>
            <person name="Strengman E."/>
            <person name="Wijmenga C."/>
            <person name="Holstege F.C.P."/>
        </authorList>
    </citation>
    <scope>INDUCTION</scope>
</reference>
<comment type="function">
    <text evidence="2">May have a role in copper and iron homeostasis.</text>
</comment>
<comment type="subcellular location">
    <subcellularLocation>
        <location evidence="3">Cytoplasm</location>
    </subcellularLocation>
</comment>
<comment type="induction">
    <text evidence="5">Induced upon copper deprivation.</text>
</comment>
<comment type="miscellaneous">
    <text evidence="4">Present with 1510 molecules/cell in log phase SD medium.</text>
</comment>
<accession>Q12288</accession>
<accession>D6VYC1</accession>
<dbReference type="EC" id="2.4.2.-"/>
<dbReference type="EMBL" id="X89514">
    <property type="protein sequence ID" value="CAA61704.1"/>
    <property type="molecule type" value="Genomic_DNA"/>
</dbReference>
<dbReference type="EMBL" id="U53877">
    <property type="protein sequence ID" value="AAB82372.1"/>
    <property type="molecule type" value="Genomic_DNA"/>
</dbReference>
<dbReference type="EMBL" id="X91258">
    <property type="protein sequence ID" value="CAA62637.1"/>
    <property type="molecule type" value="Genomic_DNA"/>
</dbReference>
<dbReference type="EMBL" id="Z73298">
    <property type="protein sequence ID" value="CAA97695.1"/>
    <property type="molecule type" value="Genomic_DNA"/>
</dbReference>
<dbReference type="EMBL" id="AY692709">
    <property type="protein sequence ID" value="AAT92728.1"/>
    <property type="molecule type" value="Genomic_DNA"/>
</dbReference>
<dbReference type="EMBL" id="BK006945">
    <property type="protein sequence ID" value="DAA09437.1"/>
    <property type="molecule type" value="Genomic_DNA"/>
</dbReference>
<dbReference type="PIR" id="S59314">
    <property type="entry name" value="S59314"/>
</dbReference>
<dbReference type="RefSeq" id="NP_013227.1">
    <property type="nucleotide sequence ID" value="NM_001182013.1"/>
</dbReference>
<dbReference type="SMR" id="Q12288"/>
<dbReference type="BioGRID" id="31395">
    <property type="interactions" value="34"/>
</dbReference>
<dbReference type="DIP" id="DIP-2566N"/>
<dbReference type="FunCoup" id="Q12288">
    <property type="interactions" value="159"/>
</dbReference>
<dbReference type="STRING" id="4932.YLR126C"/>
<dbReference type="MEROPS" id="C26.A05"/>
<dbReference type="iPTMnet" id="Q12288"/>
<dbReference type="PaxDb" id="4932-YLR126C"/>
<dbReference type="PeptideAtlas" id="Q12288"/>
<dbReference type="EnsemblFungi" id="YLR126C_mRNA">
    <property type="protein sequence ID" value="YLR126C"/>
    <property type="gene ID" value="YLR126C"/>
</dbReference>
<dbReference type="GeneID" id="850817"/>
<dbReference type="KEGG" id="sce:YLR126C"/>
<dbReference type="AGR" id="SGD:S000004116"/>
<dbReference type="SGD" id="S000004116">
    <property type="gene designation" value="YLR126C"/>
</dbReference>
<dbReference type="VEuPathDB" id="FungiDB:YLR126C"/>
<dbReference type="eggNOG" id="KOG3179">
    <property type="taxonomic scope" value="Eukaryota"/>
</dbReference>
<dbReference type="HOGENOM" id="CLU_054974_0_2_1"/>
<dbReference type="InParanoid" id="Q12288"/>
<dbReference type="OMA" id="PWIQTLK"/>
<dbReference type="OrthoDB" id="92161at2759"/>
<dbReference type="BioCyc" id="YEAST:G3O-32268-MONOMER"/>
<dbReference type="BioGRID-ORCS" id="850817">
    <property type="hits" value="0 hits in 10 CRISPR screens"/>
</dbReference>
<dbReference type="PRO" id="PR:Q12288"/>
<dbReference type="Proteomes" id="UP000002311">
    <property type="component" value="Chromosome XII"/>
</dbReference>
<dbReference type="RNAct" id="Q12288">
    <property type="molecule type" value="protein"/>
</dbReference>
<dbReference type="GO" id="GO:0005737">
    <property type="term" value="C:cytoplasm"/>
    <property type="evidence" value="ECO:0007005"/>
    <property type="project" value="SGD"/>
</dbReference>
<dbReference type="GO" id="GO:0005829">
    <property type="term" value="C:cytosol"/>
    <property type="evidence" value="ECO:0000318"/>
    <property type="project" value="GO_Central"/>
</dbReference>
<dbReference type="GO" id="GO:0034399">
    <property type="term" value="C:nuclear periphery"/>
    <property type="evidence" value="ECO:0000314"/>
    <property type="project" value="SGD"/>
</dbReference>
<dbReference type="GO" id="GO:0005634">
    <property type="term" value="C:nucleus"/>
    <property type="evidence" value="ECO:0007005"/>
    <property type="project" value="SGD"/>
</dbReference>
<dbReference type="GO" id="GO:0016740">
    <property type="term" value="F:transferase activity"/>
    <property type="evidence" value="ECO:0007669"/>
    <property type="project" value="UniProtKB-KW"/>
</dbReference>
<dbReference type="GO" id="GO:0030003">
    <property type="term" value="P:intracellular monoatomic cation homeostasis"/>
    <property type="evidence" value="ECO:0000250"/>
    <property type="project" value="SGD"/>
</dbReference>
<dbReference type="CDD" id="cd01741">
    <property type="entry name" value="GATase1_1"/>
    <property type="match status" value="1"/>
</dbReference>
<dbReference type="FunFam" id="3.40.50.880:FF:000095">
    <property type="entry name" value="Putative glutamine amidotransferase"/>
    <property type="match status" value="1"/>
</dbReference>
<dbReference type="Gene3D" id="3.40.50.880">
    <property type="match status" value="1"/>
</dbReference>
<dbReference type="InterPro" id="IPR044992">
    <property type="entry name" value="ChyE-like"/>
</dbReference>
<dbReference type="InterPro" id="IPR029062">
    <property type="entry name" value="Class_I_gatase-like"/>
</dbReference>
<dbReference type="InterPro" id="IPR017926">
    <property type="entry name" value="GATASE"/>
</dbReference>
<dbReference type="PANTHER" id="PTHR42695">
    <property type="entry name" value="GLUTAMINE AMIDOTRANSFERASE YLR126C-RELATED"/>
    <property type="match status" value="1"/>
</dbReference>
<dbReference type="PANTHER" id="PTHR42695:SF5">
    <property type="entry name" value="GLUTAMINE AMIDOTRANSFERASE YLR126C-RELATED"/>
    <property type="match status" value="1"/>
</dbReference>
<dbReference type="Pfam" id="PF00117">
    <property type="entry name" value="GATase"/>
    <property type="match status" value="1"/>
</dbReference>
<dbReference type="SUPFAM" id="SSF52317">
    <property type="entry name" value="Class I glutamine amidotransferase-like"/>
    <property type="match status" value="1"/>
</dbReference>
<dbReference type="PROSITE" id="PS51273">
    <property type="entry name" value="GATASE_TYPE_1"/>
    <property type="match status" value="1"/>
</dbReference>